<gene>
    <name type="primary">HMSD</name>
    <name type="synonym">C18orf53</name>
</gene>
<proteinExistence type="evidence at protein level"/>
<name>HMSDV_HUMAN</name>
<protein>
    <recommendedName>
        <fullName>Minor histocompatibility protein HMSD variant form</fullName>
        <shortName>HSMD-v</shortName>
    </recommendedName>
    <component>
        <recommendedName>
            <fullName>Minor histocompatibility antigen ACC-6</fullName>
            <shortName>mHA ACC-6</shortName>
        </recommendedName>
    </component>
</protein>
<feature type="chain" id="PRO_0000343869" description="Minor histocompatibility protein HMSD variant form">
    <location>
        <begin position="1"/>
        <end position="53"/>
    </location>
</feature>
<feature type="peptide" id="PRO_0000343870" description="Minor histocompatibility antigen ACC-6">
    <location>
        <begin position="1"/>
        <end position="11"/>
    </location>
</feature>
<sequence>MEIFIEVFSHFLLQLTELTLNMCLELPTGSLEKSLMISSQVLQIPVANSTKQR</sequence>
<accession>P0C7T4</accession>
<keyword id="KW-0025">Alternative splicing</keyword>
<keyword id="KW-1185">Reference proteome</keyword>
<organism>
    <name type="scientific">Homo sapiens</name>
    <name type="common">Human</name>
    <dbReference type="NCBI Taxonomy" id="9606"/>
    <lineage>
        <taxon>Eukaryota</taxon>
        <taxon>Metazoa</taxon>
        <taxon>Chordata</taxon>
        <taxon>Craniata</taxon>
        <taxon>Vertebrata</taxon>
        <taxon>Euteleostomi</taxon>
        <taxon>Mammalia</taxon>
        <taxon>Eutheria</taxon>
        <taxon>Euarchontoglires</taxon>
        <taxon>Primates</taxon>
        <taxon>Haplorrhini</taxon>
        <taxon>Catarrhini</taxon>
        <taxon>Hominidae</taxon>
        <taxon>Homo</taxon>
    </lineage>
</organism>
<comment type="function">
    <text evidence="1">This splice variant of HMSD is the precursor of the histocompatibility antigen ACC-6. More generally, minor histocompatibility antigens (mHags) refer to immunogenic peptide which, when complexed with MHC, can generate an immune response after recognition by specific T-cells. The peptides are derived from polymorphic intracellular proteins, which are cleaved by normal pathways of antigen processing. The binding of these peptides to MHC class I or class II molecules and its expression on the cell surface can stimulate T-cell responses and thereby trigger graft rejection or graft-versus-host disease (GVHD) after hematopoietic stem cell transplantation from HLA-identical sibling donor. GVHD is a frequent complication after bone marrow transplantation (BMT), due to mismatch of minor histocompatibility antigen in HLA-matched sibling marrow transplants. However, associated with GVHD, a favorable graft-versus-leukemia (GVL) can be induced by donor-recipient disparities in mHags. ACC-6 is presented to the cell surface by MHC HLA-B*4403. This complex specifically elicits donor-cytotoxic T-lymphocyte (CTL) reactivity against hematologic malignancies after treatment by HLA-identical allogenic BMT. It induces cell recognition and lysis by CTL. Immunogenicity of most autosomal mHags results from single-nucleotide polymorphisms that cause amino-acid substitutions within epitopes, leading to the differential recognition of peptides between donor and recipient.</text>
</comment>
<comment type="subunit">
    <text evidence="1">ACC-6 forms a complex with MHC HLA-B*4403.</text>
</comment>
<comment type="alternative products">
    <event type="alternative splicing"/>
    <isoform>
        <id>P0C7T4-1</id>
        <name>2</name>
        <name>HMSD-v</name>
        <sequence type="displayed"/>
    </isoform>
    <isoform>
        <id>A8MTL9-1</id>
        <name>1</name>
        <name>HMSD</name>
        <sequence type="external"/>
    </isoform>
</comment>
<comment type="tissue specificity">
    <text evidence="1">Highly expressed in dendritic cells and primary leukemia cells, especially those of myeloid lineage. ACC-6 expression is limited to cells of the hematopoietic lineage.</text>
</comment>
<evidence type="ECO:0000269" key="1">
    <source>
    </source>
</evidence>
<reference key="1">
    <citation type="journal article" date="2007" name="Blood">
        <title>Alternative splicing due to an intronic SNP in HMSD generates a novel minor histocompatibility antigen.</title>
        <authorList>
            <person name="Kawase T."/>
            <person name="Akatsuka Y."/>
            <person name="Torikai H."/>
            <person name="Morishima S."/>
            <person name="Oka A."/>
            <person name="Tsujimura A."/>
            <person name="Miyazaki M."/>
            <person name="Tsujimura K."/>
            <person name="Miyamura K."/>
            <person name="Ogawa S."/>
            <person name="Inoko H."/>
            <person name="Morishima Y."/>
            <person name="Kodera Y."/>
            <person name="Kuzushima K."/>
            <person name="Takahashi T."/>
        </authorList>
    </citation>
    <scope>NUCLEOTIDE SEQUENCE [MRNA]</scope>
    <scope>FUNCTION</scope>
    <scope>SUBUNIT</scope>
    <scope>TISSUE SPECIFICITY</scope>
    <scope>ALTERNATIVE SPLICING</scope>
</reference>
<reference key="2">
    <citation type="journal article" date="2005" name="Nature">
        <title>DNA sequence and analysis of human chromosome 18.</title>
        <authorList>
            <person name="Nusbaum C."/>
            <person name="Zody M.C."/>
            <person name="Borowsky M.L."/>
            <person name="Kamal M."/>
            <person name="Kodira C.D."/>
            <person name="Taylor T.D."/>
            <person name="Whittaker C.A."/>
            <person name="Chang J.L."/>
            <person name="Cuomo C.A."/>
            <person name="Dewar K."/>
            <person name="FitzGerald M.G."/>
            <person name="Yang X."/>
            <person name="Abouelleil A."/>
            <person name="Allen N.R."/>
            <person name="Anderson S."/>
            <person name="Bloom T."/>
            <person name="Bugalter B."/>
            <person name="Butler J."/>
            <person name="Cook A."/>
            <person name="DeCaprio D."/>
            <person name="Engels R."/>
            <person name="Garber M."/>
            <person name="Gnirke A."/>
            <person name="Hafez N."/>
            <person name="Hall J.L."/>
            <person name="Norman C.H."/>
            <person name="Itoh T."/>
            <person name="Jaffe D.B."/>
            <person name="Kuroki Y."/>
            <person name="Lehoczky J."/>
            <person name="Lui A."/>
            <person name="Macdonald P."/>
            <person name="Mauceli E."/>
            <person name="Mikkelsen T.S."/>
            <person name="Naylor J.W."/>
            <person name="Nicol R."/>
            <person name="Nguyen C."/>
            <person name="Noguchi H."/>
            <person name="O'Leary S.B."/>
            <person name="Piqani B."/>
            <person name="Smith C.L."/>
            <person name="Talamas J.A."/>
            <person name="Topham K."/>
            <person name="Totoki Y."/>
            <person name="Toyoda A."/>
            <person name="Wain H.M."/>
            <person name="Young S.K."/>
            <person name="Zeng Q."/>
            <person name="Zimmer A.R."/>
            <person name="Fujiyama A."/>
            <person name="Hattori M."/>
            <person name="Birren B.W."/>
            <person name="Sakaki Y."/>
            <person name="Lander E.S."/>
        </authorList>
    </citation>
    <scope>NUCLEOTIDE SEQUENCE [LARGE SCALE GENOMIC DNA]</scope>
</reference>
<reference key="3">
    <citation type="submission" date="2005-07" db="EMBL/GenBank/DDBJ databases">
        <authorList>
            <person name="Mural R.J."/>
            <person name="Istrail S."/>
            <person name="Sutton G.G."/>
            <person name="Florea L."/>
            <person name="Halpern A.L."/>
            <person name="Mobarry C.M."/>
            <person name="Lippert R."/>
            <person name="Walenz B."/>
            <person name="Shatkay H."/>
            <person name="Dew I."/>
            <person name="Miller J.R."/>
            <person name="Flanigan M.J."/>
            <person name="Edwards N.J."/>
            <person name="Bolanos R."/>
            <person name="Fasulo D."/>
            <person name="Halldorsson B.V."/>
            <person name="Hannenhalli S."/>
            <person name="Turner R."/>
            <person name="Yooseph S."/>
            <person name="Lu F."/>
            <person name="Nusskern D.R."/>
            <person name="Shue B.C."/>
            <person name="Zheng X.H."/>
            <person name="Zhong F."/>
            <person name="Delcher A.L."/>
            <person name="Huson D.H."/>
            <person name="Kravitz S.A."/>
            <person name="Mouchard L."/>
            <person name="Reinert K."/>
            <person name="Remington K.A."/>
            <person name="Clark A.G."/>
            <person name="Waterman M.S."/>
            <person name="Eichler E.E."/>
            <person name="Adams M.D."/>
            <person name="Hunkapiller M.W."/>
            <person name="Myers E.W."/>
            <person name="Venter J.C."/>
        </authorList>
    </citation>
    <scope>NUCLEOTIDE SEQUENCE [LARGE SCALE GENOMIC DNA]</scope>
</reference>
<dbReference type="EMBL" id="AC009802">
    <property type="status" value="NOT_ANNOTATED_CDS"/>
    <property type="molecule type" value="Genomic_DNA"/>
</dbReference>
<dbReference type="EMBL" id="CH471096">
    <property type="protein sequence ID" value="EAW63164.1"/>
    <property type="molecule type" value="Genomic_DNA"/>
</dbReference>
<dbReference type="SMR" id="P0C7T4"/>
<dbReference type="BioMuta" id="HMSD"/>
<dbReference type="MassIVE" id="P0C7T4"/>
<dbReference type="PeptideAtlas" id="P0C7T4"/>
<dbReference type="Ensembl" id="ENST00000526932.1">
    <molecule id="P0C7T4-1"/>
    <property type="protein sequence ID" value="ENSP00000431632.1"/>
    <property type="gene ID" value="ENSG00000221887.6"/>
</dbReference>
<dbReference type="UCSC" id="uc060pwo.1">
    <molecule id="P0C7T4-1"/>
    <property type="organism name" value="human"/>
</dbReference>
<dbReference type="AGR" id="HGNC:23037"/>
<dbReference type="GeneCards" id="HMSD"/>
<dbReference type="HGNC" id="HGNC:23037">
    <property type="gene designation" value="HMSD"/>
</dbReference>
<dbReference type="HPA" id="ENSG00000221887">
    <property type="expression patterns" value="Tissue enriched (brain)"/>
</dbReference>
<dbReference type="MIM" id="612086">
    <property type="type" value="gene"/>
</dbReference>
<dbReference type="neXtProt" id="NX_P0C7T4"/>
<dbReference type="OpenTargets" id="ENSG00000221887"/>
<dbReference type="VEuPathDB" id="HostDB:ENSG00000221887"/>
<dbReference type="GeneTree" id="ENSGT00940000154519"/>
<dbReference type="HOGENOM" id="CLU_3067960_0_0_1"/>
<dbReference type="OrthoDB" id="9681056at2759"/>
<dbReference type="SignaLink" id="P0C7T4"/>
<dbReference type="ChiTaRS" id="HMSD">
    <property type="organism name" value="human"/>
</dbReference>
<dbReference type="Pharos" id="P0C7T4">
    <property type="development level" value="Tbio"/>
</dbReference>
<dbReference type="Proteomes" id="UP000005640">
    <property type="component" value="Chromosome 18"/>
</dbReference>
<dbReference type="Bgee" id="ENSG00000221887">
    <property type="expression patterns" value="Expressed in C1 segment of cervical spinal cord and 95 other cell types or tissues"/>
</dbReference>
<dbReference type="ExpressionAtlas" id="P0C7T4">
    <property type="expression patterns" value="baseline and differential"/>
</dbReference>
<dbReference type="GO" id="GO:0002253">
    <property type="term" value="P:activation of immune response"/>
    <property type="evidence" value="ECO:0000315"/>
    <property type="project" value="UniProtKB"/>
</dbReference>
<dbReference type="GO" id="GO:0019835">
    <property type="term" value="P:cytolysis"/>
    <property type="evidence" value="ECO:0000315"/>
    <property type="project" value="UniProtKB"/>
</dbReference>
<dbReference type="GO" id="GO:0032729">
    <property type="term" value="P:positive regulation of type II interferon production"/>
    <property type="evidence" value="ECO:0000315"/>
    <property type="project" value="UniProtKB"/>
</dbReference>